<accession>Q07WM3</accession>
<feature type="chain" id="PRO_1000012668" description="ATP-dependent protease subunit HslV">
    <location>
        <begin position="1"/>
        <end position="174"/>
    </location>
</feature>
<feature type="active site" evidence="1">
    <location>
        <position position="2"/>
    </location>
</feature>
<feature type="binding site" evidence="1">
    <location>
        <position position="157"/>
    </location>
    <ligand>
        <name>Na(+)</name>
        <dbReference type="ChEBI" id="CHEBI:29101"/>
    </ligand>
</feature>
<feature type="binding site" evidence="1">
    <location>
        <position position="160"/>
    </location>
    <ligand>
        <name>Na(+)</name>
        <dbReference type="ChEBI" id="CHEBI:29101"/>
    </ligand>
</feature>
<feature type="binding site" evidence="1">
    <location>
        <position position="163"/>
    </location>
    <ligand>
        <name>Na(+)</name>
        <dbReference type="ChEBI" id="CHEBI:29101"/>
    </ligand>
</feature>
<evidence type="ECO:0000255" key="1">
    <source>
        <dbReference type="HAMAP-Rule" id="MF_00248"/>
    </source>
</evidence>
<protein>
    <recommendedName>
        <fullName evidence="1">ATP-dependent protease subunit HslV</fullName>
        <ecNumber evidence="1">3.4.25.2</ecNumber>
    </recommendedName>
</protein>
<comment type="function">
    <text evidence="1">Protease subunit of a proteasome-like degradation complex believed to be a general protein degrading machinery.</text>
</comment>
<comment type="catalytic activity">
    <reaction evidence="1">
        <text>ATP-dependent cleavage of peptide bonds with broad specificity.</text>
        <dbReference type="EC" id="3.4.25.2"/>
    </reaction>
</comment>
<comment type="activity regulation">
    <text evidence="1">Allosterically activated by HslU binding.</text>
</comment>
<comment type="subunit">
    <text evidence="1">A double ring-shaped homohexamer of HslV is capped on each side by a ring-shaped HslU homohexamer. The assembly of the HslU/HslV complex is dependent on binding of ATP.</text>
</comment>
<comment type="subcellular location">
    <subcellularLocation>
        <location evidence="1">Cytoplasm</location>
    </subcellularLocation>
</comment>
<comment type="similarity">
    <text evidence="1">Belongs to the peptidase T1B family. HslV subfamily.</text>
</comment>
<reference key="1">
    <citation type="submission" date="2006-08" db="EMBL/GenBank/DDBJ databases">
        <title>Complete sequence of Shewanella frigidimarina NCIMB 400.</title>
        <authorList>
            <consortium name="US DOE Joint Genome Institute"/>
            <person name="Copeland A."/>
            <person name="Lucas S."/>
            <person name="Lapidus A."/>
            <person name="Barry K."/>
            <person name="Detter J.C."/>
            <person name="Glavina del Rio T."/>
            <person name="Hammon N."/>
            <person name="Israni S."/>
            <person name="Dalin E."/>
            <person name="Tice H."/>
            <person name="Pitluck S."/>
            <person name="Fredrickson J.K."/>
            <person name="Kolker E."/>
            <person name="McCuel L.A."/>
            <person name="DiChristina T."/>
            <person name="Nealson K.H."/>
            <person name="Newman D."/>
            <person name="Tiedje J.M."/>
            <person name="Zhou J."/>
            <person name="Romine M.F."/>
            <person name="Culley D.E."/>
            <person name="Serres M."/>
            <person name="Chertkov O."/>
            <person name="Brettin T."/>
            <person name="Bruce D."/>
            <person name="Han C."/>
            <person name="Tapia R."/>
            <person name="Gilna P."/>
            <person name="Schmutz J."/>
            <person name="Larimer F."/>
            <person name="Land M."/>
            <person name="Hauser L."/>
            <person name="Kyrpides N."/>
            <person name="Mikhailova N."/>
            <person name="Richardson P."/>
        </authorList>
    </citation>
    <scope>NUCLEOTIDE SEQUENCE [LARGE SCALE GENOMIC DNA]</scope>
    <source>
        <strain>NCIMB 400</strain>
    </source>
</reference>
<dbReference type="EC" id="3.4.25.2" evidence="1"/>
<dbReference type="EMBL" id="CP000447">
    <property type="protein sequence ID" value="ABI73591.1"/>
    <property type="molecule type" value="Genomic_DNA"/>
</dbReference>
<dbReference type="RefSeq" id="WP_011639179.1">
    <property type="nucleotide sequence ID" value="NC_008345.1"/>
</dbReference>
<dbReference type="SMR" id="Q07WM3"/>
<dbReference type="STRING" id="318167.Sfri_3764"/>
<dbReference type="MEROPS" id="T01.007"/>
<dbReference type="KEGG" id="sfr:Sfri_3764"/>
<dbReference type="eggNOG" id="COG5405">
    <property type="taxonomic scope" value="Bacteria"/>
</dbReference>
<dbReference type="HOGENOM" id="CLU_093872_1_0_6"/>
<dbReference type="OrthoDB" id="9804884at2"/>
<dbReference type="Proteomes" id="UP000000684">
    <property type="component" value="Chromosome"/>
</dbReference>
<dbReference type="GO" id="GO:0009376">
    <property type="term" value="C:HslUV protease complex"/>
    <property type="evidence" value="ECO:0007669"/>
    <property type="project" value="UniProtKB-UniRule"/>
</dbReference>
<dbReference type="GO" id="GO:0005839">
    <property type="term" value="C:proteasome core complex"/>
    <property type="evidence" value="ECO:0007669"/>
    <property type="project" value="InterPro"/>
</dbReference>
<dbReference type="GO" id="GO:0046872">
    <property type="term" value="F:metal ion binding"/>
    <property type="evidence" value="ECO:0007669"/>
    <property type="project" value="UniProtKB-KW"/>
</dbReference>
<dbReference type="GO" id="GO:0004298">
    <property type="term" value="F:threonine-type endopeptidase activity"/>
    <property type="evidence" value="ECO:0007669"/>
    <property type="project" value="UniProtKB-KW"/>
</dbReference>
<dbReference type="GO" id="GO:0051603">
    <property type="term" value="P:proteolysis involved in protein catabolic process"/>
    <property type="evidence" value="ECO:0007669"/>
    <property type="project" value="InterPro"/>
</dbReference>
<dbReference type="CDD" id="cd01913">
    <property type="entry name" value="protease_HslV"/>
    <property type="match status" value="1"/>
</dbReference>
<dbReference type="FunFam" id="3.60.20.10:FF:000002">
    <property type="entry name" value="ATP-dependent protease subunit HslV"/>
    <property type="match status" value="1"/>
</dbReference>
<dbReference type="Gene3D" id="3.60.20.10">
    <property type="entry name" value="Glutamine Phosphoribosylpyrophosphate, subunit 1, domain 1"/>
    <property type="match status" value="1"/>
</dbReference>
<dbReference type="HAMAP" id="MF_00248">
    <property type="entry name" value="HslV"/>
    <property type="match status" value="1"/>
</dbReference>
<dbReference type="InterPro" id="IPR022281">
    <property type="entry name" value="ATP-dep_Prtase_HsIV_su"/>
</dbReference>
<dbReference type="InterPro" id="IPR029055">
    <property type="entry name" value="Ntn_hydrolases_N"/>
</dbReference>
<dbReference type="InterPro" id="IPR001353">
    <property type="entry name" value="Proteasome_sua/b"/>
</dbReference>
<dbReference type="InterPro" id="IPR023333">
    <property type="entry name" value="Proteasome_suB-type"/>
</dbReference>
<dbReference type="NCBIfam" id="TIGR03692">
    <property type="entry name" value="ATP_dep_HslV"/>
    <property type="match status" value="1"/>
</dbReference>
<dbReference type="NCBIfam" id="NF003964">
    <property type="entry name" value="PRK05456.1"/>
    <property type="match status" value="1"/>
</dbReference>
<dbReference type="PANTHER" id="PTHR32194:SF0">
    <property type="entry name" value="ATP-DEPENDENT PROTEASE SUBUNIT HSLV"/>
    <property type="match status" value="1"/>
</dbReference>
<dbReference type="PANTHER" id="PTHR32194">
    <property type="entry name" value="METALLOPROTEASE TLDD"/>
    <property type="match status" value="1"/>
</dbReference>
<dbReference type="Pfam" id="PF00227">
    <property type="entry name" value="Proteasome"/>
    <property type="match status" value="1"/>
</dbReference>
<dbReference type="PIRSF" id="PIRSF039093">
    <property type="entry name" value="HslV"/>
    <property type="match status" value="1"/>
</dbReference>
<dbReference type="SUPFAM" id="SSF56235">
    <property type="entry name" value="N-terminal nucleophile aminohydrolases (Ntn hydrolases)"/>
    <property type="match status" value="1"/>
</dbReference>
<dbReference type="PROSITE" id="PS51476">
    <property type="entry name" value="PROTEASOME_BETA_2"/>
    <property type="match status" value="1"/>
</dbReference>
<organism>
    <name type="scientific">Shewanella frigidimarina (strain NCIMB 400)</name>
    <dbReference type="NCBI Taxonomy" id="318167"/>
    <lineage>
        <taxon>Bacteria</taxon>
        <taxon>Pseudomonadati</taxon>
        <taxon>Pseudomonadota</taxon>
        <taxon>Gammaproteobacteria</taxon>
        <taxon>Alteromonadales</taxon>
        <taxon>Shewanellaceae</taxon>
        <taxon>Shewanella</taxon>
    </lineage>
</organism>
<proteinExistence type="inferred from homology"/>
<gene>
    <name evidence="1" type="primary">hslV</name>
    <name type="ordered locus">Sfri_3764</name>
</gene>
<sequence length="174" mass="18987">MTTIVSVRRNNQVVIAGDGQVSLGNTVMKGNARKVRRLYHNKVLAGFAGGTADAFTLFERFEAKLEMHQGHLLKSAVELAKDWRSDKMLRKLEAMLVVADTESSLIITGNGDVVQPEYDLIAIGSGGNYAHASALALLQNTELSAEEIAEKSLTIAGDICVFTNQFKTIEKLDY</sequence>
<name>HSLV_SHEFN</name>
<keyword id="KW-0021">Allosteric enzyme</keyword>
<keyword id="KW-0963">Cytoplasm</keyword>
<keyword id="KW-0378">Hydrolase</keyword>
<keyword id="KW-0479">Metal-binding</keyword>
<keyword id="KW-0645">Protease</keyword>
<keyword id="KW-1185">Reference proteome</keyword>
<keyword id="KW-0915">Sodium</keyword>
<keyword id="KW-0888">Threonine protease</keyword>